<dbReference type="EMBL" id="AK158773">
    <property type="protein sequence ID" value="BAE34657.1"/>
    <property type="molecule type" value="mRNA"/>
</dbReference>
<dbReference type="EMBL" id="AK159495">
    <property type="protein sequence ID" value="BAE35129.1"/>
    <property type="molecule type" value="mRNA"/>
</dbReference>
<dbReference type="EMBL" id="AC154731">
    <property type="status" value="NOT_ANNOTATED_CDS"/>
    <property type="molecule type" value="Genomic_DNA"/>
</dbReference>
<dbReference type="EMBL" id="CH466535">
    <property type="protein sequence ID" value="EDL36192.1"/>
    <property type="molecule type" value="Genomic_DNA"/>
</dbReference>
<dbReference type="EMBL" id="BC145700">
    <property type="protein sequence ID" value="AAI45701.1"/>
    <property type="status" value="ALT_INIT"/>
    <property type="molecule type" value="mRNA"/>
</dbReference>
<dbReference type="CCDS" id="CCDS49504.1"/>
<dbReference type="RefSeq" id="NP_076262.2">
    <property type="nucleotide sequence ID" value="NM_023773.2"/>
</dbReference>
<dbReference type="SMR" id="Q3TYA6"/>
<dbReference type="BioGRID" id="217406">
    <property type="interactions" value="3"/>
</dbReference>
<dbReference type="FunCoup" id="Q3TYA6">
    <property type="interactions" value="3215"/>
</dbReference>
<dbReference type="STRING" id="10090.ENSMUSP00000112170"/>
<dbReference type="iPTMnet" id="Q3TYA6"/>
<dbReference type="PhosphoSitePlus" id="Q3TYA6"/>
<dbReference type="SwissPalm" id="Q3TYA6"/>
<dbReference type="jPOST" id="Q3TYA6"/>
<dbReference type="PaxDb" id="10090-ENSMUSP00000112170"/>
<dbReference type="PeptideAtlas" id="Q3TYA6"/>
<dbReference type="ProteomicsDB" id="291437"/>
<dbReference type="Pumba" id="Q3TYA6"/>
<dbReference type="Antibodypedia" id="22243">
    <property type="antibodies" value="104 antibodies from 28 providers"/>
</dbReference>
<dbReference type="DNASU" id="75339"/>
<dbReference type="Ensembl" id="ENSMUST00000116468.2">
    <property type="protein sequence ID" value="ENSMUSP00000112170.2"/>
    <property type="gene ID" value="ENSMUSG00000079184.11"/>
</dbReference>
<dbReference type="GeneID" id="75339"/>
<dbReference type="KEGG" id="mmu:75339"/>
<dbReference type="UCSC" id="uc011zmc.1">
    <property type="organism name" value="mouse"/>
</dbReference>
<dbReference type="AGR" id="MGI:1922589"/>
<dbReference type="CTD" id="54737"/>
<dbReference type="MGI" id="MGI:1922589">
    <property type="gene designation" value="Mphosph8"/>
</dbReference>
<dbReference type="VEuPathDB" id="HostDB:ENSMUSG00000079184"/>
<dbReference type="eggNOG" id="KOG0504">
    <property type="taxonomic scope" value="Eukaryota"/>
</dbReference>
<dbReference type="eggNOG" id="KOG1911">
    <property type="taxonomic scope" value="Eukaryota"/>
</dbReference>
<dbReference type="GeneTree" id="ENSGT00730000111087"/>
<dbReference type="HOGENOM" id="CLU_332588_0_0_1"/>
<dbReference type="InParanoid" id="Q3TYA6"/>
<dbReference type="OMA" id="PNRACHP"/>
<dbReference type="OrthoDB" id="10071877at2759"/>
<dbReference type="PhylomeDB" id="Q3TYA6"/>
<dbReference type="TreeFam" id="TF106394"/>
<dbReference type="BioGRID-ORCS" id="75339">
    <property type="hits" value="9 hits in 81 CRISPR screens"/>
</dbReference>
<dbReference type="ChiTaRS" id="Mphosph8">
    <property type="organism name" value="mouse"/>
</dbReference>
<dbReference type="PRO" id="PR:Q3TYA6"/>
<dbReference type="Proteomes" id="UP000000589">
    <property type="component" value="Chromosome 14"/>
</dbReference>
<dbReference type="RNAct" id="Q3TYA6">
    <property type="molecule type" value="protein"/>
</dbReference>
<dbReference type="Bgee" id="ENSMUSG00000079184">
    <property type="expression patterns" value="Expressed in animal zygote and 255 other cell types or tissues"/>
</dbReference>
<dbReference type="GO" id="GO:0005829">
    <property type="term" value="C:cytosol"/>
    <property type="evidence" value="ECO:0007669"/>
    <property type="project" value="Ensembl"/>
</dbReference>
<dbReference type="GO" id="GO:0000792">
    <property type="term" value="C:heterochromatin"/>
    <property type="evidence" value="ECO:0000250"/>
    <property type="project" value="UniProtKB"/>
</dbReference>
<dbReference type="GO" id="GO:0005730">
    <property type="term" value="C:nucleolus"/>
    <property type="evidence" value="ECO:0007669"/>
    <property type="project" value="Ensembl"/>
</dbReference>
<dbReference type="GO" id="GO:0005654">
    <property type="term" value="C:nucleoplasm"/>
    <property type="evidence" value="ECO:0000304"/>
    <property type="project" value="Reactome"/>
</dbReference>
<dbReference type="GO" id="GO:0000786">
    <property type="term" value="C:nucleosome"/>
    <property type="evidence" value="ECO:0000250"/>
    <property type="project" value="UniProtKB"/>
</dbReference>
<dbReference type="GO" id="GO:0005886">
    <property type="term" value="C:plasma membrane"/>
    <property type="evidence" value="ECO:0007669"/>
    <property type="project" value="Ensembl"/>
</dbReference>
<dbReference type="GO" id="GO:0003682">
    <property type="term" value="F:chromatin binding"/>
    <property type="evidence" value="ECO:0007669"/>
    <property type="project" value="Ensembl"/>
</dbReference>
<dbReference type="GO" id="GO:0062072">
    <property type="term" value="F:histone H3K9me2/3 reader activity"/>
    <property type="evidence" value="ECO:0000250"/>
    <property type="project" value="UniProtKB"/>
</dbReference>
<dbReference type="GO" id="GO:0140719">
    <property type="term" value="P:constitutive heterochromatin formation"/>
    <property type="evidence" value="ECO:0000250"/>
    <property type="project" value="UniProtKB"/>
</dbReference>
<dbReference type="GO" id="GO:0044027">
    <property type="term" value="P:negative regulation of gene expression via chromosomal CpG island methylation"/>
    <property type="evidence" value="ECO:0000250"/>
    <property type="project" value="UniProtKB"/>
</dbReference>
<dbReference type="GO" id="GO:0141005">
    <property type="term" value="P:transposable element silencing by heterochromatin formation"/>
    <property type="evidence" value="ECO:0000250"/>
    <property type="project" value="UniProtKB"/>
</dbReference>
<dbReference type="CDD" id="cd18633">
    <property type="entry name" value="CD_MMP8"/>
    <property type="match status" value="1"/>
</dbReference>
<dbReference type="FunFam" id="2.40.50.40:FF:000022">
    <property type="entry name" value="M-phase phosphoprotein 8"/>
    <property type="match status" value="1"/>
</dbReference>
<dbReference type="FunFam" id="1.25.40.20:FF:000132">
    <property type="entry name" value="M-phase phosphoprotein 8 isoform X1"/>
    <property type="match status" value="1"/>
</dbReference>
<dbReference type="Gene3D" id="2.40.50.40">
    <property type="match status" value="1"/>
</dbReference>
<dbReference type="Gene3D" id="1.25.40.20">
    <property type="entry name" value="Ankyrin repeat-containing domain"/>
    <property type="match status" value="1"/>
</dbReference>
<dbReference type="InterPro" id="IPR002110">
    <property type="entry name" value="Ankyrin_rpt"/>
</dbReference>
<dbReference type="InterPro" id="IPR036770">
    <property type="entry name" value="Ankyrin_rpt-contain_sf"/>
</dbReference>
<dbReference type="InterPro" id="IPR016197">
    <property type="entry name" value="Chromo-like_dom_sf"/>
</dbReference>
<dbReference type="InterPro" id="IPR000953">
    <property type="entry name" value="Chromo/chromo_shadow_dom"/>
</dbReference>
<dbReference type="InterPro" id="IPR023780">
    <property type="entry name" value="Chromo_domain"/>
</dbReference>
<dbReference type="InterPro" id="IPR023779">
    <property type="entry name" value="Chromodomain_CS"/>
</dbReference>
<dbReference type="InterPro" id="IPR050889">
    <property type="entry name" value="Dendritic_Spine_Reg/Scaffold"/>
</dbReference>
<dbReference type="PANTHER" id="PTHR24166:SF47">
    <property type="entry name" value="M-PHASE PHOSPHOPROTEIN 8"/>
    <property type="match status" value="1"/>
</dbReference>
<dbReference type="PANTHER" id="PTHR24166">
    <property type="entry name" value="ROLLING PEBBLES, ISOFORM B"/>
    <property type="match status" value="1"/>
</dbReference>
<dbReference type="Pfam" id="PF00023">
    <property type="entry name" value="Ank"/>
    <property type="match status" value="1"/>
</dbReference>
<dbReference type="Pfam" id="PF12796">
    <property type="entry name" value="Ank_2"/>
    <property type="match status" value="1"/>
</dbReference>
<dbReference type="Pfam" id="PF00385">
    <property type="entry name" value="Chromo"/>
    <property type="match status" value="1"/>
</dbReference>
<dbReference type="SMART" id="SM00248">
    <property type="entry name" value="ANK"/>
    <property type="match status" value="3"/>
</dbReference>
<dbReference type="SMART" id="SM00298">
    <property type="entry name" value="CHROMO"/>
    <property type="match status" value="1"/>
</dbReference>
<dbReference type="SUPFAM" id="SSF48403">
    <property type="entry name" value="Ankyrin repeat"/>
    <property type="match status" value="1"/>
</dbReference>
<dbReference type="SUPFAM" id="SSF54160">
    <property type="entry name" value="Chromo domain-like"/>
    <property type="match status" value="1"/>
</dbReference>
<dbReference type="PROSITE" id="PS50297">
    <property type="entry name" value="ANK_REP_REGION"/>
    <property type="match status" value="1"/>
</dbReference>
<dbReference type="PROSITE" id="PS50088">
    <property type="entry name" value="ANK_REPEAT"/>
    <property type="match status" value="3"/>
</dbReference>
<dbReference type="PROSITE" id="PS00598">
    <property type="entry name" value="CHROMO_1"/>
    <property type="match status" value="1"/>
</dbReference>
<dbReference type="PROSITE" id="PS50013">
    <property type="entry name" value="CHROMO_2"/>
    <property type="match status" value="1"/>
</dbReference>
<feature type="chain" id="PRO_0000415976" description="M-phase phosphoprotein 8">
    <location>
        <begin position="1"/>
        <end position="858"/>
    </location>
</feature>
<feature type="domain" description="Chromo" evidence="2">
    <location>
        <begin position="59"/>
        <end position="118"/>
    </location>
</feature>
<feature type="repeat" description="ANK 1">
    <location>
        <begin position="598"/>
        <end position="627"/>
    </location>
</feature>
<feature type="repeat" description="ANK 2">
    <location>
        <begin position="631"/>
        <end position="660"/>
    </location>
</feature>
<feature type="repeat" description="ANK 3">
    <location>
        <begin position="664"/>
        <end position="693"/>
    </location>
</feature>
<feature type="repeat" description="ANK 4">
    <location>
        <begin position="697"/>
        <end position="726"/>
    </location>
</feature>
<feature type="region of interest" description="Disordered" evidence="3">
    <location>
        <begin position="18"/>
        <end position="55"/>
    </location>
</feature>
<feature type="region of interest" description="Histone H3K9me3 binding" evidence="1">
    <location>
        <begin position="80"/>
        <end position="87"/>
    </location>
</feature>
<feature type="region of interest" description="Disordered" evidence="3">
    <location>
        <begin position="129"/>
        <end position="175"/>
    </location>
</feature>
<feature type="region of interest" description="Disordered" evidence="3">
    <location>
        <begin position="209"/>
        <end position="234"/>
    </location>
</feature>
<feature type="region of interest" description="Disordered" evidence="3">
    <location>
        <begin position="250"/>
        <end position="300"/>
    </location>
</feature>
<feature type="region of interest" description="Disordered" evidence="3">
    <location>
        <begin position="321"/>
        <end position="431"/>
    </location>
</feature>
<feature type="compositionally biased region" description="Basic and acidic residues" evidence="3">
    <location>
        <begin position="159"/>
        <end position="169"/>
    </location>
</feature>
<feature type="compositionally biased region" description="Acidic residues" evidence="3">
    <location>
        <begin position="273"/>
        <end position="282"/>
    </location>
</feature>
<feature type="compositionally biased region" description="Basic and acidic residues" evidence="3">
    <location>
        <begin position="283"/>
        <end position="300"/>
    </location>
</feature>
<feature type="compositionally biased region" description="Basic and acidic residues" evidence="3">
    <location>
        <begin position="335"/>
        <end position="357"/>
    </location>
</feature>
<feature type="compositionally biased region" description="Basic and acidic residues" evidence="3">
    <location>
        <begin position="407"/>
        <end position="431"/>
    </location>
</feature>
<feature type="site" description="Interaction with histone H3K9me3" evidence="1">
    <location>
        <position position="59"/>
    </location>
</feature>
<feature type="modified residue" description="Phosphoserine" evidence="8 9">
    <location>
        <position position="51"/>
    </location>
</feature>
<feature type="modified residue" description="Phosphoserine" evidence="9">
    <location>
        <position position="85"/>
    </location>
</feature>
<feature type="modified residue" description="Phosphoserine" evidence="9">
    <location>
        <position position="136"/>
    </location>
</feature>
<feature type="modified residue" description="Phosphoserine" evidence="9">
    <location>
        <position position="138"/>
    </location>
</feature>
<feature type="modified residue" description="Phosphothreonine" evidence="9">
    <location>
        <position position="144"/>
    </location>
</feature>
<feature type="modified residue" description="Phosphoserine; by CDK1" evidence="1">
    <location>
        <position position="149"/>
    </location>
</feature>
<feature type="modified residue" description="Phosphoserine; by CDK1" evidence="1">
    <location>
        <position position="164"/>
    </location>
</feature>
<feature type="modified residue" description="Phosphoserine" evidence="1">
    <location>
        <position position="188"/>
    </location>
</feature>
<feature type="modified residue" description="Phosphoserine" evidence="9">
    <location>
        <position position="267"/>
    </location>
</feature>
<feature type="modified residue" description="Phosphoserine" evidence="9">
    <location>
        <position position="271"/>
    </location>
</feature>
<feature type="modified residue" description="Phosphoserine" evidence="1">
    <location>
        <position position="278"/>
    </location>
</feature>
<feature type="modified residue" description="Phosphoserine" evidence="1">
    <location>
        <position position="318"/>
    </location>
</feature>
<feature type="modified residue" description="Phosphothreonine; by CDK1" evidence="1">
    <location>
        <position position="385"/>
    </location>
</feature>
<feature type="modified residue" description="Phosphoserine" evidence="1">
    <location>
        <position position="392"/>
    </location>
</feature>
<feature type="modified residue" description="Phosphoserine" evidence="1">
    <location>
        <position position="400"/>
    </location>
</feature>
<feature type="modified residue" description="Phosphothreonine" evidence="1">
    <location>
        <position position="453"/>
    </location>
</feature>
<feature type="sequence conflict" description="In Ref. 1; BAE35129." evidence="6" ref="1">
    <original>K</original>
    <variation>E</variation>
    <location>
        <position position="158"/>
    </location>
</feature>
<gene>
    <name evidence="1 7" type="primary">Mphosph8</name>
    <name evidence="1" type="synonym">Mpp8</name>
</gene>
<organism>
    <name type="scientific">Mus musculus</name>
    <name type="common">Mouse</name>
    <dbReference type="NCBI Taxonomy" id="10090"/>
    <lineage>
        <taxon>Eukaryota</taxon>
        <taxon>Metazoa</taxon>
        <taxon>Chordata</taxon>
        <taxon>Craniata</taxon>
        <taxon>Vertebrata</taxon>
        <taxon>Euteleostomi</taxon>
        <taxon>Mammalia</taxon>
        <taxon>Eutheria</taxon>
        <taxon>Euarchontoglires</taxon>
        <taxon>Glires</taxon>
        <taxon>Rodentia</taxon>
        <taxon>Myomorpha</taxon>
        <taxon>Muroidea</taxon>
        <taxon>Muridae</taxon>
        <taxon>Murinae</taxon>
        <taxon>Mus</taxon>
        <taxon>Mus</taxon>
    </lineage>
</organism>
<name>MPP8_MOUSE</name>
<protein>
    <recommendedName>
        <fullName evidence="1">M-phase phosphoprotein 8</fullName>
    </recommendedName>
</protein>
<reference key="1">
    <citation type="journal article" date="2005" name="Science">
        <title>The transcriptional landscape of the mammalian genome.</title>
        <authorList>
            <person name="Carninci P."/>
            <person name="Kasukawa T."/>
            <person name="Katayama S."/>
            <person name="Gough J."/>
            <person name="Frith M.C."/>
            <person name="Maeda N."/>
            <person name="Oyama R."/>
            <person name="Ravasi T."/>
            <person name="Lenhard B."/>
            <person name="Wells C."/>
            <person name="Kodzius R."/>
            <person name="Shimokawa K."/>
            <person name="Bajic V.B."/>
            <person name="Brenner S.E."/>
            <person name="Batalov S."/>
            <person name="Forrest A.R."/>
            <person name="Zavolan M."/>
            <person name="Davis M.J."/>
            <person name="Wilming L.G."/>
            <person name="Aidinis V."/>
            <person name="Allen J.E."/>
            <person name="Ambesi-Impiombato A."/>
            <person name="Apweiler R."/>
            <person name="Aturaliya R.N."/>
            <person name="Bailey T.L."/>
            <person name="Bansal M."/>
            <person name="Baxter L."/>
            <person name="Beisel K.W."/>
            <person name="Bersano T."/>
            <person name="Bono H."/>
            <person name="Chalk A.M."/>
            <person name="Chiu K.P."/>
            <person name="Choudhary V."/>
            <person name="Christoffels A."/>
            <person name="Clutterbuck D.R."/>
            <person name="Crowe M.L."/>
            <person name="Dalla E."/>
            <person name="Dalrymple B.P."/>
            <person name="de Bono B."/>
            <person name="Della Gatta G."/>
            <person name="di Bernardo D."/>
            <person name="Down T."/>
            <person name="Engstrom P."/>
            <person name="Fagiolini M."/>
            <person name="Faulkner G."/>
            <person name="Fletcher C.F."/>
            <person name="Fukushima T."/>
            <person name="Furuno M."/>
            <person name="Futaki S."/>
            <person name="Gariboldi M."/>
            <person name="Georgii-Hemming P."/>
            <person name="Gingeras T.R."/>
            <person name="Gojobori T."/>
            <person name="Green R.E."/>
            <person name="Gustincich S."/>
            <person name="Harbers M."/>
            <person name="Hayashi Y."/>
            <person name="Hensch T.K."/>
            <person name="Hirokawa N."/>
            <person name="Hill D."/>
            <person name="Huminiecki L."/>
            <person name="Iacono M."/>
            <person name="Ikeo K."/>
            <person name="Iwama A."/>
            <person name="Ishikawa T."/>
            <person name="Jakt M."/>
            <person name="Kanapin A."/>
            <person name="Katoh M."/>
            <person name="Kawasawa Y."/>
            <person name="Kelso J."/>
            <person name="Kitamura H."/>
            <person name="Kitano H."/>
            <person name="Kollias G."/>
            <person name="Krishnan S.P."/>
            <person name="Kruger A."/>
            <person name="Kummerfeld S.K."/>
            <person name="Kurochkin I.V."/>
            <person name="Lareau L.F."/>
            <person name="Lazarevic D."/>
            <person name="Lipovich L."/>
            <person name="Liu J."/>
            <person name="Liuni S."/>
            <person name="McWilliam S."/>
            <person name="Madan Babu M."/>
            <person name="Madera M."/>
            <person name="Marchionni L."/>
            <person name="Matsuda H."/>
            <person name="Matsuzawa S."/>
            <person name="Miki H."/>
            <person name="Mignone F."/>
            <person name="Miyake S."/>
            <person name="Morris K."/>
            <person name="Mottagui-Tabar S."/>
            <person name="Mulder N."/>
            <person name="Nakano N."/>
            <person name="Nakauchi H."/>
            <person name="Ng P."/>
            <person name="Nilsson R."/>
            <person name="Nishiguchi S."/>
            <person name="Nishikawa S."/>
            <person name="Nori F."/>
            <person name="Ohara O."/>
            <person name="Okazaki Y."/>
            <person name="Orlando V."/>
            <person name="Pang K.C."/>
            <person name="Pavan W.J."/>
            <person name="Pavesi G."/>
            <person name="Pesole G."/>
            <person name="Petrovsky N."/>
            <person name="Piazza S."/>
            <person name="Reed J."/>
            <person name="Reid J.F."/>
            <person name="Ring B.Z."/>
            <person name="Ringwald M."/>
            <person name="Rost B."/>
            <person name="Ruan Y."/>
            <person name="Salzberg S.L."/>
            <person name="Sandelin A."/>
            <person name="Schneider C."/>
            <person name="Schoenbach C."/>
            <person name="Sekiguchi K."/>
            <person name="Semple C.A."/>
            <person name="Seno S."/>
            <person name="Sessa L."/>
            <person name="Sheng Y."/>
            <person name="Shibata Y."/>
            <person name="Shimada H."/>
            <person name="Shimada K."/>
            <person name="Silva D."/>
            <person name="Sinclair B."/>
            <person name="Sperling S."/>
            <person name="Stupka E."/>
            <person name="Sugiura K."/>
            <person name="Sultana R."/>
            <person name="Takenaka Y."/>
            <person name="Taki K."/>
            <person name="Tammoja K."/>
            <person name="Tan S.L."/>
            <person name="Tang S."/>
            <person name="Taylor M.S."/>
            <person name="Tegner J."/>
            <person name="Teichmann S.A."/>
            <person name="Ueda H.R."/>
            <person name="van Nimwegen E."/>
            <person name="Verardo R."/>
            <person name="Wei C.L."/>
            <person name="Yagi K."/>
            <person name="Yamanishi H."/>
            <person name="Zabarovsky E."/>
            <person name="Zhu S."/>
            <person name="Zimmer A."/>
            <person name="Hide W."/>
            <person name="Bult C."/>
            <person name="Grimmond S.M."/>
            <person name="Teasdale R.D."/>
            <person name="Liu E.T."/>
            <person name="Brusic V."/>
            <person name="Quackenbush J."/>
            <person name="Wahlestedt C."/>
            <person name="Mattick J.S."/>
            <person name="Hume D.A."/>
            <person name="Kai C."/>
            <person name="Sasaki D."/>
            <person name="Tomaru Y."/>
            <person name="Fukuda S."/>
            <person name="Kanamori-Katayama M."/>
            <person name="Suzuki M."/>
            <person name="Aoki J."/>
            <person name="Arakawa T."/>
            <person name="Iida J."/>
            <person name="Imamura K."/>
            <person name="Itoh M."/>
            <person name="Kato T."/>
            <person name="Kawaji H."/>
            <person name="Kawagashira N."/>
            <person name="Kawashima T."/>
            <person name="Kojima M."/>
            <person name="Kondo S."/>
            <person name="Konno H."/>
            <person name="Nakano K."/>
            <person name="Ninomiya N."/>
            <person name="Nishio T."/>
            <person name="Okada M."/>
            <person name="Plessy C."/>
            <person name="Shibata K."/>
            <person name="Shiraki T."/>
            <person name="Suzuki S."/>
            <person name="Tagami M."/>
            <person name="Waki K."/>
            <person name="Watahiki A."/>
            <person name="Okamura-Oho Y."/>
            <person name="Suzuki H."/>
            <person name="Kawai J."/>
            <person name="Hayashizaki Y."/>
        </authorList>
    </citation>
    <scope>NUCLEOTIDE SEQUENCE [LARGE SCALE MRNA]</scope>
    <source>
        <strain>C57BL/6J</strain>
        <tissue>Visual cortex</tissue>
    </source>
</reference>
<reference key="2">
    <citation type="journal article" date="2009" name="PLoS Biol.">
        <title>Lineage-specific biology revealed by a finished genome assembly of the mouse.</title>
        <authorList>
            <person name="Church D.M."/>
            <person name="Goodstadt L."/>
            <person name="Hillier L.W."/>
            <person name="Zody M.C."/>
            <person name="Goldstein S."/>
            <person name="She X."/>
            <person name="Bult C.J."/>
            <person name="Agarwala R."/>
            <person name="Cherry J.L."/>
            <person name="DiCuccio M."/>
            <person name="Hlavina W."/>
            <person name="Kapustin Y."/>
            <person name="Meric P."/>
            <person name="Maglott D."/>
            <person name="Birtle Z."/>
            <person name="Marques A.C."/>
            <person name="Graves T."/>
            <person name="Zhou S."/>
            <person name="Teague B."/>
            <person name="Potamousis K."/>
            <person name="Churas C."/>
            <person name="Place M."/>
            <person name="Herschleb J."/>
            <person name="Runnheim R."/>
            <person name="Forrest D."/>
            <person name="Amos-Landgraf J."/>
            <person name="Schwartz D.C."/>
            <person name="Cheng Z."/>
            <person name="Lindblad-Toh K."/>
            <person name="Eichler E.E."/>
            <person name="Ponting C.P."/>
        </authorList>
    </citation>
    <scope>NUCLEOTIDE SEQUENCE [LARGE SCALE GENOMIC DNA]</scope>
    <source>
        <strain>C57BL/6J</strain>
    </source>
</reference>
<reference key="3">
    <citation type="submission" date="2005-09" db="EMBL/GenBank/DDBJ databases">
        <authorList>
            <person name="Mural R.J."/>
            <person name="Adams M.D."/>
            <person name="Myers E.W."/>
            <person name="Smith H.O."/>
            <person name="Venter J.C."/>
        </authorList>
    </citation>
    <scope>NUCLEOTIDE SEQUENCE [LARGE SCALE GENOMIC DNA]</scope>
</reference>
<reference key="4">
    <citation type="journal article" date="2004" name="Genome Res.">
        <title>The status, quality, and expansion of the NIH full-length cDNA project: the Mammalian Gene Collection (MGC).</title>
        <authorList>
            <consortium name="The MGC Project Team"/>
        </authorList>
    </citation>
    <scope>NUCLEOTIDE SEQUENCE [LARGE SCALE MRNA]</scope>
    <source>
        <tissue>Brain</tissue>
    </source>
</reference>
<reference key="5">
    <citation type="journal article" date="2007" name="Proc. Natl. Acad. Sci. U.S.A.">
        <title>Large-scale phosphorylation analysis of mouse liver.</title>
        <authorList>
            <person name="Villen J."/>
            <person name="Beausoleil S.A."/>
            <person name="Gerber S.A."/>
            <person name="Gygi S.P."/>
        </authorList>
    </citation>
    <scope>PHOSPHORYLATION [LARGE SCALE ANALYSIS] AT SER-51</scope>
    <scope>IDENTIFICATION BY MASS SPECTROMETRY [LARGE SCALE ANALYSIS]</scope>
    <source>
        <tissue>Liver</tissue>
    </source>
</reference>
<reference key="6">
    <citation type="journal article" date="2010" name="Cell">
        <title>A tissue-specific atlas of mouse protein phosphorylation and expression.</title>
        <authorList>
            <person name="Huttlin E.L."/>
            <person name="Jedrychowski M.P."/>
            <person name="Elias J.E."/>
            <person name="Goswami T."/>
            <person name="Rad R."/>
            <person name="Beausoleil S.A."/>
            <person name="Villen J."/>
            <person name="Haas W."/>
            <person name="Sowa M.E."/>
            <person name="Gygi S.P."/>
        </authorList>
    </citation>
    <scope>PHOSPHORYLATION [LARGE SCALE ANALYSIS] AT SER-51; SER-85; SER-136; SER-138; THR-144; SER-267 AND SER-271</scope>
    <scope>IDENTIFICATION BY MASS SPECTROMETRY [LARGE SCALE ANALYSIS]</scope>
    <source>
        <tissue>Brain</tissue>
        <tissue>Kidney</tissue>
        <tissue>Lung</tissue>
        <tissue>Pancreas</tissue>
        <tissue>Spleen</tissue>
        <tissue>Testis</tissue>
    </source>
</reference>
<reference key="7">
    <citation type="journal article" date="2013" name="Biochem. Biophys. Res. Commun.">
        <title>Mitotic phosphorylation of MPP8 by cyclin-dependent kinases regulates chromatin dissociation.</title>
        <authorList>
            <person name="Nishigaki M."/>
            <person name="Kawada Y."/>
            <person name="Misaki T."/>
            <person name="Murata K."/>
            <person name="Goshima T."/>
            <person name="Hirokawa T."/>
            <person name="Yamada C."/>
            <person name="Shimada M."/>
            <person name="Nakanishi M."/>
        </authorList>
    </citation>
    <scope>SUBCELLULAR LOCATION</scope>
    <scope>TISSUE SPECIFICITY</scope>
</reference>
<reference key="8">
    <citation type="journal article" date="2019" name="Exp. Cell Res.">
        <title>Fam208a orchestrates interaction protein network essential for early embryonic development and cell division.</title>
        <authorList>
            <person name="Gresakova V."/>
            <person name="Novosadova V."/>
            <person name="Prochazkova M."/>
            <person name="Bhargava S."/>
            <person name="Jenickova I."/>
            <person name="Prochazka J."/>
            <person name="Sedlacek R."/>
        </authorList>
    </citation>
    <scope>INTERACTION WITH TASOR</scope>
    <scope>TISSUE SPECIFICITY</scope>
</reference>
<comment type="function">
    <text evidence="1">Heterochromatin component that specifically recognizes and binds methylated 'Lys-9' of histone H3 (H3K9me) and promotes recruitment of proteins that mediate epigenetic repression. Mediates recruitment of the HUSH complex to H3K9me3 sites: the HUSH complex is recruited to genomic loci rich in H3K9me3 and is required to maintain transcriptional silencing by promoting recruitment of SETDB1, a histone methyltransferase that mediates further deposition of H3K9me3, as well as MORC2. Binds H3K9me and promotes DNA methylation by recruiting DNMT3A to target CpG sites; these can be situated within the coding region of the gene. Mediates down-regulation of CDH1 expression. Also represses L1 retrotransposons in collaboration with MORC2 and, probably, SETDB1, the silencing is dependent of repressive epigenetic modifications, such as H3K9me3 mark. Silencing events often occur within introns of transcriptionally active genes, and lead to the down-regulation of host gene expression. The HUSH complex is also involved in the silencing of unintegrated retroviral DNA by being recruited by ZNF638: some part of the retroviral DNA formed immediately after infection remains unintegrated in the host genome and is transcriptionally repressed.</text>
</comment>
<comment type="subunit">
    <text evidence="1 5">Homodimer. Interacts (via chromo domain) with histone H3K9me3. Has the highest affinity for H3K9me3, and lesser affinity for H3K9me2 and H3K9me1. Component of the HUSH complex; at least composed of TASOR, PPHLN1 and MPHOSPH8. Interacts with DNMT3, EHMT1 and SETDB1. Interacts with MORC2; the interaction associateS MORC2 with the HUSH complex which recruits MORC2 to heterochromatic loci. Interacts with ZNF638; leading to recruitment of the HUSH complex to unintegrated retroviral DNA (By similarity). Interacts with TASOR (PubMed:31112734).</text>
</comment>
<comment type="subcellular location">
    <subcellularLocation>
        <location evidence="4">Nucleus</location>
    </subcellularLocation>
    <subcellularLocation>
        <location evidence="4">Chromosome</location>
    </subcellularLocation>
    <text evidence="1 4">Detected on heterochromatin (PubMed:23416073). Dissociates from chromatin during interphase and early mitosis (PubMed:23416073). Detected on nucleosomes (By similarity).</text>
</comment>
<comment type="tissue specificity">
    <text evidence="5">Expressed in the spermatogonia, spermatocytes and granular cells within the cerebellum.</text>
</comment>
<comment type="domain">
    <text evidence="1">The chromo domain mediates interaction with methylated 'Lys-9' of histone H3 (H3K9me), with the highest affinity for the trimethylated form (H3K9me3).</text>
</comment>
<comment type="PTM">
    <text evidence="1">Phosphorylated in M (mitotic) phase. Phosphorylation by CDK1 promotes dissociation from chromatin.</text>
</comment>
<comment type="sequence caution" evidence="6">
    <conflict type="erroneous initiation">
        <sequence resource="EMBL-CDS" id="AAI45701"/>
    </conflict>
    <text>Truncated N-terminus.</text>
</comment>
<keyword id="KW-0040">ANK repeat</keyword>
<keyword id="KW-0158">Chromosome</keyword>
<keyword id="KW-0539">Nucleus</keyword>
<keyword id="KW-0597">Phosphoprotein</keyword>
<keyword id="KW-1185">Reference proteome</keyword>
<keyword id="KW-0677">Repeat</keyword>
<keyword id="KW-0804">Transcription</keyword>
<keyword id="KW-0805">Transcription regulation</keyword>
<sequence>MAAAAEEGMSAAALVMSVPDSIGRSPESEGVGAGDEEKDAATKGTVAVGDSEEDGEDVFEVERILDMKCEGGKNLYKVRWKGYTSEDDTWEPEVHLEDCKEVLLEFRKKLAENKAKAVRKDIQRLSLNNDIFEADSDSDQQSDTKEDISPRKKKKKIKCKEETSPEDLRKKRTKMGKLKDKFKTELESTSEIIGFDVKTKKRIWEVKEELKDSKKPKKDEIKETKELKKANKRAEVRDLKIKIREDVKENRKTKKERYIESPLESESPNDSLILEDDSEDFISDNREENQNVRSVRDKTAQETVQEGIFEKHLDDLISIEEDAGTRVRRKKTKPRKFEEPKEIKKLESTNAFLERRAIPKKQRNQDKGISNLELNKLPSPVFAQTLKSSRLSGEEKSLKSPDLAEEEKEKKNEPKGKYQKRYDLDKEEKARKEPKVLKSFKEIRNAFDLFKKTTEEKNDVLENNSKREEISLDSKIMNDNKTKDKCSLKEKRNTRDETDTWAYIAAEGDQEVSDSVCQTDETSDGRQPVLSLGMDLQLEWMKLEDFQKHLDGEDEPFITTNRIPNNLLRDAVKNGDYIAVKVALNSNEEYNLDQEDSTGMTLVMLAAAGGQDDLLRLLITKGAKVNGRQKNGTTALIHAAEKNFLTTVAILLEAGAFVNVQQSNGETALMKACKRGNSDIVRLVIECGADCNILSKHQNSALYFAKQCNNVLVYELLKSHLETLSRVAEETIRDYFESRLALLEPVFPIACHRLCEGPDFSTDFNYMPPQNMPEGSGVLLFIFHANFLGKDVIARLCGPCSVQAVVLNDKFQLPVFLDSHFVYSFSPVAGPNKLFIRLTEAPFAKVKLLIGAYRVQLQ</sequence>
<accession>Q3TYA6</accession>
<accession>A6H600</accession>
<accession>Q3TWY7</accession>
<proteinExistence type="evidence at protein level"/>
<evidence type="ECO:0000250" key="1">
    <source>
        <dbReference type="UniProtKB" id="Q99549"/>
    </source>
</evidence>
<evidence type="ECO:0000255" key="2">
    <source>
        <dbReference type="PROSITE-ProRule" id="PRU00053"/>
    </source>
</evidence>
<evidence type="ECO:0000256" key="3">
    <source>
        <dbReference type="SAM" id="MobiDB-lite"/>
    </source>
</evidence>
<evidence type="ECO:0000269" key="4">
    <source>
    </source>
</evidence>
<evidence type="ECO:0000269" key="5">
    <source>
    </source>
</evidence>
<evidence type="ECO:0000305" key="6"/>
<evidence type="ECO:0000312" key="7">
    <source>
        <dbReference type="MGI" id="MGI:1922589"/>
    </source>
</evidence>
<evidence type="ECO:0007744" key="8">
    <source>
    </source>
</evidence>
<evidence type="ECO:0007744" key="9">
    <source>
    </source>
</evidence>